<reference key="1">
    <citation type="journal article" date="2006" name="PLoS Genet.">
        <title>The complete genome sequence and comparative genome analysis of the high pathogenicity Yersinia enterocolitica strain 8081.</title>
        <authorList>
            <person name="Thomson N.R."/>
            <person name="Howard S."/>
            <person name="Wren B.W."/>
            <person name="Holden M.T.G."/>
            <person name="Crossman L."/>
            <person name="Challis G.L."/>
            <person name="Churcher C."/>
            <person name="Mungall K."/>
            <person name="Brooks K."/>
            <person name="Chillingworth T."/>
            <person name="Feltwell T."/>
            <person name="Abdellah Z."/>
            <person name="Hauser H."/>
            <person name="Jagels K."/>
            <person name="Maddison M."/>
            <person name="Moule S."/>
            <person name="Sanders M."/>
            <person name="Whitehead S."/>
            <person name="Quail M.A."/>
            <person name="Dougan G."/>
            <person name="Parkhill J."/>
            <person name="Prentice M.B."/>
        </authorList>
    </citation>
    <scope>NUCLEOTIDE SEQUENCE [LARGE SCALE GENOMIC DNA]</scope>
    <source>
        <strain>NCTC 13174 / 8081</strain>
    </source>
</reference>
<accession>A1JJ54</accession>
<name>LSRC_YERE8</name>
<gene>
    <name type="primary">lsrC</name>
    <name type="ordered locus">YE0527</name>
</gene>
<protein>
    <recommendedName>
        <fullName>Autoinducer 2 import system permease protein LsrC</fullName>
        <shortName>AI-2 import system permease protein LsrC</shortName>
    </recommendedName>
</protein>
<feature type="chain" id="PRO_0000351353" description="Autoinducer 2 import system permease protein LsrC">
    <location>
        <begin position="1"/>
        <end position="360"/>
    </location>
</feature>
<feature type="transmembrane region" description="Helical" evidence="2">
    <location>
        <begin position="18"/>
        <end position="38"/>
    </location>
</feature>
<feature type="transmembrane region" description="Helical" evidence="2">
    <location>
        <begin position="45"/>
        <end position="65"/>
    </location>
</feature>
<feature type="transmembrane region" description="Helical" evidence="2">
    <location>
        <begin position="76"/>
        <end position="96"/>
    </location>
</feature>
<feature type="transmembrane region" description="Helical" evidence="2">
    <location>
        <begin position="99"/>
        <end position="119"/>
    </location>
</feature>
<feature type="transmembrane region" description="Helical" evidence="2">
    <location>
        <begin position="121"/>
        <end position="141"/>
    </location>
</feature>
<feature type="transmembrane region" description="Helical" evidence="2">
    <location>
        <begin position="161"/>
        <end position="181"/>
    </location>
</feature>
<feature type="transmembrane region" description="Helical" evidence="2">
    <location>
        <begin position="219"/>
        <end position="239"/>
    </location>
</feature>
<feature type="transmembrane region" description="Helical" evidence="2">
    <location>
        <begin position="255"/>
        <end position="275"/>
    </location>
</feature>
<feature type="transmembrane region" description="Helical" evidence="2">
    <location>
        <begin position="290"/>
        <end position="310"/>
    </location>
</feature>
<feature type="region of interest" description="Disordered" evidence="3">
    <location>
        <begin position="334"/>
        <end position="360"/>
    </location>
</feature>
<feature type="compositionally biased region" description="Low complexity" evidence="3">
    <location>
        <begin position="342"/>
        <end position="352"/>
    </location>
</feature>
<organism>
    <name type="scientific">Yersinia enterocolitica serotype O:8 / biotype 1B (strain NCTC 13174 / 8081)</name>
    <dbReference type="NCBI Taxonomy" id="393305"/>
    <lineage>
        <taxon>Bacteria</taxon>
        <taxon>Pseudomonadati</taxon>
        <taxon>Pseudomonadota</taxon>
        <taxon>Gammaproteobacteria</taxon>
        <taxon>Enterobacterales</taxon>
        <taxon>Yersiniaceae</taxon>
        <taxon>Yersinia</taxon>
    </lineage>
</organism>
<evidence type="ECO:0000250" key="1"/>
<evidence type="ECO:0000255" key="2"/>
<evidence type="ECO:0000256" key="3">
    <source>
        <dbReference type="SAM" id="MobiDB-lite"/>
    </source>
</evidence>
<evidence type="ECO:0000305" key="4"/>
<proteinExistence type="inferred from homology"/>
<sequence>MLKFTQSYQFIQNNREGTALLAILALFALLGVIDRNYFNLQTFTMIFSSAQILILLAIGATMVMLTRNIDVSVGSITGLCAVTVGMALNAGFGLALSCLFALLVGMGAGFFNGILVTWLRIPAIVATLGTLGLYRGLMLLLTGGKWIEGLPADLKSLSTPILFSISPIGWLIMLLIVAMALLLGKTAFGRSFYATGDNLQGARQLGIRTDSIRIFAFSMNGVMAALAGIVFASQIGFIPNQTGSGLEMKAIAACVLGGISLLGGTGTIIGAILGAYLLTQIDSVLVLLRLPAWWNDFIAGLVLLGVLVFDGRLRCAVERNIRQQKYARFTTRPVAPDKKVKSNNNKAPSSKSFTKKEVVR</sequence>
<dbReference type="EMBL" id="AM286415">
    <property type="protein sequence ID" value="CAL10645.1"/>
    <property type="status" value="ALT_INIT"/>
    <property type="molecule type" value="Genomic_DNA"/>
</dbReference>
<dbReference type="RefSeq" id="WP_042661592.1">
    <property type="nucleotide sequence ID" value="NC_008800.1"/>
</dbReference>
<dbReference type="RefSeq" id="YP_001004887.1">
    <property type="nucleotide sequence ID" value="NC_008800.1"/>
</dbReference>
<dbReference type="KEGG" id="yen:YE0527"/>
<dbReference type="PATRIC" id="fig|393305.7.peg.617"/>
<dbReference type="eggNOG" id="COG1172">
    <property type="taxonomic scope" value="Bacteria"/>
</dbReference>
<dbReference type="HOGENOM" id="CLU_028880_0_1_6"/>
<dbReference type="OrthoDB" id="6384190at2"/>
<dbReference type="Proteomes" id="UP000000642">
    <property type="component" value="Chromosome"/>
</dbReference>
<dbReference type="GO" id="GO:0005886">
    <property type="term" value="C:plasma membrane"/>
    <property type="evidence" value="ECO:0007669"/>
    <property type="project" value="UniProtKB-SubCell"/>
</dbReference>
<dbReference type="GO" id="GO:0022857">
    <property type="term" value="F:transmembrane transporter activity"/>
    <property type="evidence" value="ECO:0007669"/>
    <property type="project" value="InterPro"/>
</dbReference>
<dbReference type="CDD" id="cd06579">
    <property type="entry name" value="TM_PBP1_transp_AraH_like"/>
    <property type="match status" value="1"/>
</dbReference>
<dbReference type="InterPro" id="IPR001851">
    <property type="entry name" value="ABC_transp_permease"/>
</dbReference>
<dbReference type="NCBIfam" id="NF011961">
    <property type="entry name" value="PRK15432.1"/>
    <property type="match status" value="1"/>
</dbReference>
<dbReference type="PANTHER" id="PTHR32196">
    <property type="entry name" value="ABC TRANSPORTER PERMEASE PROTEIN YPHD-RELATED-RELATED"/>
    <property type="match status" value="1"/>
</dbReference>
<dbReference type="PANTHER" id="PTHR32196:SF29">
    <property type="entry name" value="AUTOINDUCER 2 IMPORT SYSTEM PERMEASE PROTEIN LSRC"/>
    <property type="match status" value="1"/>
</dbReference>
<dbReference type="Pfam" id="PF02653">
    <property type="entry name" value="BPD_transp_2"/>
    <property type="match status" value="1"/>
</dbReference>
<comment type="function">
    <text evidence="1">Part of the ABC transporter complex LsrABCD involved in autoinducer 2 (AI-2) import. Probably responsible for the translocation of the substrate across the membrane (By similarity).</text>
</comment>
<comment type="subunit">
    <text evidence="1">The complex is composed of two ATP-binding proteins (LsrA), two transmembrane proteins (LsrC and LsrD) and a solute-binding protein (LsrB).</text>
</comment>
<comment type="subcellular location">
    <subcellularLocation>
        <location evidence="1">Cell inner membrane</location>
        <topology evidence="1">Multi-pass membrane protein</topology>
    </subcellularLocation>
</comment>
<comment type="similarity">
    <text evidence="4">Belongs to the binding-protein-dependent transport system permease family. AraH/RbsC subfamily.</text>
</comment>
<comment type="sequence caution" evidence="4">
    <conflict type="erroneous initiation">
        <sequence resource="EMBL-CDS" id="CAL10645"/>
    </conflict>
</comment>
<keyword id="KW-0997">Cell inner membrane</keyword>
<keyword id="KW-1003">Cell membrane</keyword>
<keyword id="KW-0472">Membrane</keyword>
<keyword id="KW-0812">Transmembrane</keyword>
<keyword id="KW-1133">Transmembrane helix</keyword>
<keyword id="KW-0813">Transport</keyword>